<reference key="1">
    <citation type="journal article" date="2003" name="Mol. Microbiol.">
        <title>An integrated analysis of the genome of the hyperthermophilic archaeon Pyrococcus abyssi.</title>
        <authorList>
            <person name="Cohen G.N."/>
            <person name="Barbe V."/>
            <person name="Flament D."/>
            <person name="Galperin M."/>
            <person name="Heilig R."/>
            <person name="Lecompte O."/>
            <person name="Poch O."/>
            <person name="Prieur D."/>
            <person name="Querellou J."/>
            <person name="Ripp R."/>
            <person name="Thierry J.-C."/>
            <person name="Van der Oost J."/>
            <person name="Weissenbach J."/>
            <person name="Zivanovic Y."/>
            <person name="Forterre P."/>
        </authorList>
    </citation>
    <scope>NUCLEOTIDE SEQUENCE [LARGE SCALE GENOMIC DNA]</scope>
    <source>
        <strain>GE5 / Orsay</strain>
    </source>
</reference>
<reference key="2">
    <citation type="journal article" date="2012" name="Curr. Microbiol.">
        <title>Re-annotation of two hyperthermophilic archaea Pyrococcus abyssi GE5 and Pyrococcus furiosus DSM 3638.</title>
        <authorList>
            <person name="Gao J."/>
            <person name="Wang J."/>
        </authorList>
    </citation>
    <scope>GENOME REANNOTATION</scope>
    <source>
        <strain>GE5 / Orsay</strain>
    </source>
</reference>
<reference key="3">
    <citation type="journal article" date="2008" name="Mol. Microbiol.">
        <title>Acquisition of a bacterial RumA-type tRNA(uracil-54, C5)-methyltransferase by Archaea through an ancient horizontal gene transfer.</title>
        <authorList>
            <person name="Urbonavicius J."/>
            <person name="Auxilien S."/>
            <person name="Walbott H."/>
            <person name="Trachana K."/>
            <person name="Golinelli-Pimpaneau B."/>
            <person name="Brochier-Armanet C."/>
            <person name="Grosjean H."/>
        </authorList>
    </citation>
    <scope>FUNCTION</scope>
    <scope>CATALYTIC ACTIVITY</scope>
    <scope>ACTIVITY REGULATION</scope>
    <scope>IRON-SULFUR CLUSTER</scope>
    <scope>DOMAIN</scope>
</reference>
<reference key="4">
    <citation type="journal article" date="2008" name="Nucleic Acids Res.">
        <title>The crystal structure of Pyrococcus abyssi tRNA (uracil-54, C5)-methyltransferase provides insights into its tRNA specificity.</title>
        <authorList>
            <person name="Walbott H."/>
            <person name="Leulliot N."/>
            <person name="Grosjean H."/>
            <person name="Golinelli-Pimpaneau B."/>
        </authorList>
    </citation>
    <scope>X-RAY CRYSTALLOGRAPHY (1.80 ANGSTROMS) IN COMPLEX WITH S-ADENOSYL-L-HOMOCYSTEINE</scope>
    <scope>DOMAIN</scope>
</reference>
<proteinExistence type="evidence at protein level"/>
<accession>Q9UZR7</accession>
<accession>G8ZJN0</accession>
<gene>
    <name type="ordered locus">PYRAB10780</name>
    <name type="ORF">PAB0719</name>
</gene>
<organism>
    <name type="scientific">Pyrococcus abyssi (strain GE5 / Orsay)</name>
    <dbReference type="NCBI Taxonomy" id="272844"/>
    <lineage>
        <taxon>Archaea</taxon>
        <taxon>Methanobacteriati</taxon>
        <taxon>Methanobacteriota</taxon>
        <taxon>Thermococci</taxon>
        <taxon>Thermococcales</taxon>
        <taxon>Thermococcaceae</taxon>
        <taxon>Pyrococcus</taxon>
    </lineage>
</organism>
<dbReference type="EC" id="2.1.1.35"/>
<dbReference type="EMBL" id="AJ248286">
    <property type="protein sequence ID" value="CAB49989.1"/>
    <property type="molecule type" value="Genomic_DNA"/>
</dbReference>
<dbReference type="EMBL" id="HE613800">
    <property type="protein sequence ID" value="CCE70489.1"/>
    <property type="molecule type" value="Genomic_DNA"/>
</dbReference>
<dbReference type="PIR" id="H75085">
    <property type="entry name" value="H75085"/>
</dbReference>
<dbReference type="RefSeq" id="WP_010868196.1">
    <property type="nucleotide sequence ID" value="NC_000868.1"/>
</dbReference>
<dbReference type="PDB" id="2JJQ">
    <property type="method" value="X-ray"/>
    <property type="resolution" value="1.80 A"/>
    <property type="chains" value="A=1-405"/>
</dbReference>
<dbReference type="PDB" id="2VS1">
    <property type="method" value="X-ray"/>
    <property type="resolution" value="2.10 A"/>
    <property type="chains" value="A=1-405"/>
</dbReference>
<dbReference type="PDBsum" id="2JJQ"/>
<dbReference type="PDBsum" id="2VS1"/>
<dbReference type="SMR" id="Q9UZR7"/>
<dbReference type="STRING" id="272844.PAB0719"/>
<dbReference type="KEGG" id="pab:PAB0719"/>
<dbReference type="PATRIC" id="fig|272844.11.peg.1133"/>
<dbReference type="eggNOG" id="arCOG00122">
    <property type="taxonomic scope" value="Archaea"/>
</dbReference>
<dbReference type="HOGENOM" id="CLU_014689_8_1_2"/>
<dbReference type="OrthoDB" id="85343at2157"/>
<dbReference type="PhylomeDB" id="Q9UZR7"/>
<dbReference type="BRENDA" id="2.1.1.35">
    <property type="organism ID" value="5242"/>
</dbReference>
<dbReference type="EvolutionaryTrace" id="Q9UZR7"/>
<dbReference type="Proteomes" id="UP000000810">
    <property type="component" value="Chromosome"/>
</dbReference>
<dbReference type="Proteomes" id="UP000009139">
    <property type="component" value="Chromosome"/>
</dbReference>
<dbReference type="GO" id="GO:0051539">
    <property type="term" value="F:4 iron, 4 sulfur cluster binding"/>
    <property type="evidence" value="ECO:0007669"/>
    <property type="project" value="UniProtKB-KW"/>
</dbReference>
<dbReference type="GO" id="GO:0046872">
    <property type="term" value="F:metal ion binding"/>
    <property type="evidence" value="ECO:0007669"/>
    <property type="project" value="UniProtKB-KW"/>
</dbReference>
<dbReference type="GO" id="GO:0030697">
    <property type="term" value="F:tRNA (uracil(54)-C5)-methyltransferase activity, S-adenosyl methionine-dependent"/>
    <property type="evidence" value="ECO:0000314"/>
    <property type="project" value="UniProtKB"/>
</dbReference>
<dbReference type="GO" id="GO:0030488">
    <property type="term" value="P:tRNA methylation"/>
    <property type="evidence" value="ECO:0000314"/>
    <property type="project" value="UniProtKB"/>
</dbReference>
<dbReference type="CDD" id="cd02440">
    <property type="entry name" value="AdoMet_MTases"/>
    <property type="match status" value="1"/>
</dbReference>
<dbReference type="FunFam" id="3.40.50.150:FF:000009">
    <property type="entry name" value="23S rRNA (Uracil(1939)-C(5))-methyltransferase RlmD"/>
    <property type="match status" value="1"/>
</dbReference>
<dbReference type="FunFam" id="2.40.50.1070:FF:000008">
    <property type="entry name" value="23S rRNA (uracil(747)-C(5))-methyltransferase"/>
    <property type="match status" value="1"/>
</dbReference>
<dbReference type="FunFam" id="2.40.50.140:FF:000439">
    <property type="entry name" value="23S rRNA (uracil(747)-C(5))-methyltransferase"/>
    <property type="match status" value="1"/>
</dbReference>
<dbReference type="Gene3D" id="2.40.50.1070">
    <property type="match status" value="1"/>
</dbReference>
<dbReference type="Gene3D" id="2.40.50.140">
    <property type="entry name" value="Nucleic acid-binding proteins"/>
    <property type="match status" value="1"/>
</dbReference>
<dbReference type="Gene3D" id="3.40.50.150">
    <property type="entry name" value="Vaccinia Virus protein VP39"/>
    <property type="match status" value="1"/>
</dbReference>
<dbReference type="InterPro" id="IPR030390">
    <property type="entry name" value="MeTrfase_TrmA_AS"/>
</dbReference>
<dbReference type="InterPro" id="IPR030391">
    <property type="entry name" value="MeTrfase_TrmA_CS"/>
</dbReference>
<dbReference type="InterPro" id="IPR012340">
    <property type="entry name" value="NA-bd_OB-fold"/>
</dbReference>
<dbReference type="InterPro" id="IPR048845">
    <property type="entry name" value="RUMT_ARLMC_TRAM_dom"/>
</dbReference>
<dbReference type="InterPro" id="IPR029063">
    <property type="entry name" value="SAM-dependent_MTases_sf"/>
</dbReference>
<dbReference type="InterPro" id="IPR010280">
    <property type="entry name" value="U5_MeTrfase_fam"/>
</dbReference>
<dbReference type="NCBIfam" id="TIGR00479">
    <property type="entry name" value="rumA"/>
    <property type="match status" value="1"/>
</dbReference>
<dbReference type="PANTHER" id="PTHR11061">
    <property type="entry name" value="RNA M5U METHYLTRANSFERASE"/>
    <property type="match status" value="1"/>
</dbReference>
<dbReference type="PANTHER" id="PTHR11061:SF30">
    <property type="entry name" value="TRNA (URACIL(54)-C(5))-METHYLTRANSFERASE"/>
    <property type="match status" value="1"/>
</dbReference>
<dbReference type="Pfam" id="PF21579">
    <property type="entry name" value="PabTrmU54_TRAM_dom"/>
    <property type="match status" value="1"/>
</dbReference>
<dbReference type="Pfam" id="PF05958">
    <property type="entry name" value="tRNA_U5-meth_tr"/>
    <property type="match status" value="1"/>
</dbReference>
<dbReference type="SUPFAM" id="SSF53335">
    <property type="entry name" value="S-adenosyl-L-methionine-dependent methyltransferases"/>
    <property type="match status" value="1"/>
</dbReference>
<dbReference type="PROSITE" id="PS51687">
    <property type="entry name" value="SAM_MT_RNA_M5U"/>
    <property type="match status" value="1"/>
</dbReference>
<dbReference type="PROSITE" id="PS01230">
    <property type="entry name" value="TRMA_1"/>
    <property type="match status" value="1"/>
</dbReference>
<dbReference type="PROSITE" id="PS01231">
    <property type="entry name" value="TRMA_2"/>
    <property type="match status" value="1"/>
</dbReference>
<feature type="chain" id="PRO_0000162053" description="tRNA (uracil(54)-C(5))-methyltransferase">
    <location>
        <begin position="1"/>
        <end position="405"/>
    </location>
</feature>
<feature type="active site" description="Nucleophile" evidence="2">
    <location>
        <position position="367"/>
    </location>
</feature>
<feature type="active site" description="Proton acceptor" evidence="3">
    <location>
        <position position="399"/>
    </location>
</feature>
<feature type="binding site" evidence="1">
    <location>
        <position position="61"/>
    </location>
    <ligand>
        <name>[4Fe-4S] cluster</name>
        <dbReference type="ChEBI" id="CHEBI:49883"/>
    </ligand>
</feature>
<feature type="binding site" evidence="1">
    <location>
        <position position="67"/>
    </location>
    <ligand>
        <name>[4Fe-4S] cluster</name>
        <dbReference type="ChEBI" id="CHEBI:49883"/>
    </ligand>
</feature>
<feature type="binding site" evidence="1">
    <location>
        <position position="70"/>
    </location>
    <ligand>
        <name>[4Fe-4S] cluster</name>
        <dbReference type="ChEBI" id="CHEBI:49883"/>
    </ligand>
</feature>
<feature type="binding site" evidence="1">
    <location>
        <position position="137"/>
    </location>
    <ligand>
        <name>[4Fe-4S] cluster</name>
        <dbReference type="ChEBI" id="CHEBI:49883"/>
    </ligand>
</feature>
<feature type="binding site">
    <location>
        <position position="252"/>
    </location>
    <ligand>
        <name>S-adenosyl-L-methionine</name>
        <dbReference type="ChEBI" id="CHEBI:59789"/>
    </ligand>
</feature>
<feature type="binding site">
    <location>
        <position position="278"/>
    </location>
    <ligand>
        <name>S-adenosyl-L-methionine</name>
        <dbReference type="ChEBI" id="CHEBI:59789"/>
    </ligand>
</feature>
<feature type="binding site">
    <location>
        <position position="283"/>
    </location>
    <ligand>
        <name>S-adenosyl-L-methionine</name>
        <dbReference type="ChEBI" id="CHEBI:59789"/>
    </ligand>
</feature>
<feature type="binding site">
    <location>
        <begin position="299"/>
        <end position="300"/>
    </location>
    <ligand>
        <name>S-adenosyl-L-methionine</name>
        <dbReference type="ChEBI" id="CHEBI:59789"/>
    </ligand>
</feature>
<feature type="binding site">
    <location>
        <position position="326"/>
    </location>
    <ligand>
        <name>S-adenosyl-L-methionine</name>
        <dbReference type="ChEBI" id="CHEBI:59789"/>
    </ligand>
</feature>
<feature type="binding site">
    <location>
        <position position="340"/>
    </location>
    <ligand>
        <name>S-adenosyl-L-methionine</name>
        <dbReference type="ChEBI" id="CHEBI:59789"/>
    </ligand>
</feature>
<feature type="strand" evidence="6">
    <location>
        <begin position="2"/>
        <end position="4"/>
    </location>
</feature>
<feature type="strand" evidence="6">
    <location>
        <begin position="14"/>
        <end position="16"/>
    </location>
</feature>
<feature type="strand" evidence="6">
    <location>
        <begin position="19"/>
        <end position="21"/>
    </location>
</feature>
<feature type="strand" evidence="6">
    <location>
        <begin position="29"/>
        <end position="51"/>
    </location>
</feature>
<feature type="turn" evidence="6">
    <location>
        <begin position="71"/>
        <end position="74"/>
    </location>
</feature>
<feature type="helix" evidence="6">
    <location>
        <begin position="77"/>
        <end position="92"/>
    </location>
</feature>
<feature type="strand" evidence="6">
    <location>
        <begin position="97"/>
        <end position="99"/>
    </location>
</feature>
<feature type="strand" evidence="6">
    <location>
        <begin position="104"/>
        <end position="106"/>
    </location>
</feature>
<feature type="strand" evidence="6">
    <location>
        <begin position="110"/>
        <end position="116"/>
    </location>
</feature>
<feature type="strand" evidence="6">
    <location>
        <begin position="119"/>
        <end position="123"/>
    </location>
</feature>
<feature type="strand" evidence="6">
    <location>
        <begin position="130"/>
        <end position="133"/>
    </location>
</feature>
<feature type="turn" evidence="6">
    <location>
        <begin position="138"/>
        <end position="140"/>
    </location>
</feature>
<feature type="helix" evidence="6">
    <location>
        <begin position="142"/>
        <end position="158"/>
    </location>
</feature>
<feature type="strand" evidence="6">
    <location>
        <begin position="162"/>
        <end position="164"/>
    </location>
</feature>
<feature type="turn" evidence="6">
    <location>
        <begin position="165"/>
        <end position="168"/>
    </location>
</feature>
<feature type="strand" evidence="6">
    <location>
        <begin position="171"/>
        <end position="179"/>
    </location>
</feature>
<feature type="turn" evidence="6">
    <location>
        <begin position="181"/>
        <end position="183"/>
    </location>
</feature>
<feature type="strand" evidence="6">
    <location>
        <begin position="186"/>
        <end position="195"/>
    </location>
</feature>
<feature type="turn" evidence="6">
    <location>
        <begin position="201"/>
        <end position="203"/>
    </location>
</feature>
<feature type="strand" evidence="6">
    <location>
        <begin position="207"/>
        <end position="213"/>
    </location>
</feature>
<feature type="strand" evidence="6">
    <location>
        <begin position="216"/>
        <end position="218"/>
    </location>
</feature>
<feature type="strand" evidence="6">
    <location>
        <begin position="224"/>
        <end position="230"/>
    </location>
</feature>
<feature type="strand" evidence="6">
    <location>
        <begin position="234"/>
        <end position="238"/>
    </location>
</feature>
<feature type="strand" evidence="6">
    <location>
        <begin position="241"/>
        <end position="245"/>
    </location>
</feature>
<feature type="helix" evidence="6">
    <location>
        <begin position="255"/>
        <end position="268"/>
    </location>
</feature>
<feature type="strand" evidence="6">
    <location>
        <begin position="271"/>
        <end position="277"/>
    </location>
</feature>
<feature type="turn" evidence="6">
    <location>
        <begin position="280"/>
        <end position="282"/>
    </location>
</feature>
<feature type="helix" evidence="6">
    <location>
        <begin position="283"/>
        <end position="290"/>
    </location>
</feature>
<feature type="strand" evidence="6">
    <location>
        <begin position="294"/>
        <end position="300"/>
    </location>
</feature>
<feature type="helix" evidence="6">
    <location>
        <begin position="302"/>
        <end position="315"/>
    </location>
</feature>
<feature type="strand" evidence="6">
    <location>
        <begin position="319"/>
        <end position="323"/>
    </location>
</feature>
<feature type="turn" evidence="6">
    <location>
        <begin position="326"/>
        <end position="328"/>
    </location>
</feature>
<feature type="strand" evidence="6">
    <location>
        <begin position="335"/>
        <end position="339"/>
    </location>
</feature>
<feature type="helix" evidence="6">
    <location>
        <begin position="348"/>
        <end position="357"/>
    </location>
</feature>
<feature type="strand" evidence="6">
    <location>
        <begin position="360"/>
        <end position="367"/>
    </location>
</feature>
<feature type="helix" evidence="6">
    <location>
        <begin position="369"/>
        <end position="378"/>
    </location>
</feature>
<feature type="strand" evidence="6">
    <location>
        <begin position="382"/>
        <end position="389"/>
    </location>
</feature>
<feature type="strand" evidence="6">
    <location>
        <begin position="399"/>
        <end position="405"/>
    </location>
</feature>
<keyword id="KW-0002">3D-structure</keyword>
<keyword id="KW-0004">4Fe-4S</keyword>
<keyword id="KW-0408">Iron</keyword>
<keyword id="KW-0411">Iron-sulfur</keyword>
<keyword id="KW-0479">Metal-binding</keyword>
<keyword id="KW-0489">Methyltransferase</keyword>
<keyword id="KW-0949">S-adenosyl-L-methionine</keyword>
<keyword id="KW-0808">Transferase</keyword>
<keyword id="KW-0819">tRNA processing</keyword>
<evidence type="ECO:0000250" key="1"/>
<evidence type="ECO:0000255" key="2">
    <source>
        <dbReference type="PROSITE-ProRule" id="PRU01024"/>
    </source>
</evidence>
<evidence type="ECO:0000255" key="3">
    <source>
        <dbReference type="PROSITE-ProRule" id="PRU10015"/>
    </source>
</evidence>
<evidence type="ECO:0000269" key="4">
    <source>
    </source>
</evidence>
<evidence type="ECO:0000269" key="5">
    <source>
    </source>
</evidence>
<evidence type="ECO:0007829" key="6">
    <source>
        <dbReference type="PDB" id="2JJQ"/>
    </source>
</evidence>
<name>ATRMA_PYRAB</name>
<comment type="function">
    <text evidence="4">Catalyzes the formation of 5-methyl-uridine at position 54 (m5U54) in tRNA.</text>
</comment>
<comment type="catalytic activity">
    <reaction evidence="4">
        <text>uridine(54) in tRNA + S-adenosyl-L-methionine = 5-methyluridine(54) in tRNA + S-adenosyl-L-homocysteine + H(+)</text>
        <dbReference type="Rhea" id="RHEA:42712"/>
        <dbReference type="Rhea" id="RHEA-COMP:10167"/>
        <dbReference type="Rhea" id="RHEA-COMP:10193"/>
        <dbReference type="ChEBI" id="CHEBI:15378"/>
        <dbReference type="ChEBI" id="CHEBI:57856"/>
        <dbReference type="ChEBI" id="CHEBI:59789"/>
        <dbReference type="ChEBI" id="CHEBI:65315"/>
        <dbReference type="ChEBI" id="CHEBI:74447"/>
        <dbReference type="EC" id="2.1.1.35"/>
    </reaction>
</comment>
<comment type="activity regulation">
    <text evidence="4">Activated by magnesium ions.</text>
</comment>
<comment type="domain">
    <text evidence="4 5">Contains a N-terminal TRAM-like domain, an iron-sulfur cluster in the central region and a C-terminal catalytic domain. The tRNA-binding site is probably formed at the interface of the three regions.</text>
</comment>
<comment type="similarity">
    <text evidence="2">Belongs to the class I-like SAM-binding methyltransferase superfamily. RNA M5U methyltransferase family.</text>
</comment>
<protein>
    <recommendedName>
        <fullName>tRNA (uracil(54)-C(5))-methyltransferase</fullName>
        <ecNumber>2.1.1.35</ecNumber>
    </recommendedName>
    <alternativeName>
        <fullName>PabTrmU54</fullName>
    </alternativeName>
    <alternativeName>
        <fullName>tRNA(m5U54)-methyltransferase</fullName>
        <shortName>RUMT</shortName>
    </alternativeName>
</protein>
<sequence>MRGVIRKLNDDGFGVLKGILVPFSAPGDEIIVERVERVKKRRVASQWKLVRSSPLRVGPRCKAFGKCGGCTLQHLNYDYQLEFKRKKLKRILGFEVEVVPSPKIFGHRNRIDLAITKDGIGFRERGKWWKIVDIDECPVFGKTSREAIERLKEFIEEEKISVWNIKKDEGFLRYMVLREGKFTEEVMVNFVTKEGNLPDPTNYFDFDSIYWSVNRSKSDVSYGDIERFWGKEFIRERLDDVDYLIHPNSFFQTNSYQAVNLVRKVSELVEGEKILDMYSGVGTFGIYLAKRGFNVKGFDSNEFAIEMARRNVEINNVDAEFEVASDREVSVKGFDTVIVDPPRAGLHPRLVKRLNREKPGVIVYVSCNPETFARDVKMLDYRIDEIVALDMFPHTPHVELVAKLV</sequence>